<comment type="function">
    <text evidence="1">One of the primary rRNA binding proteins, it binds directly to 16S rRNA where it nucleates assembly of the body of the 30S subunit.</text>
</comment>
<comment type="function">
    <text evidence="1">With S5 and S12 plays an important role in translational accuracy.</text>
</comment>
<comment type="subunit">
    <text evidence="1">Part of the 30S ribosomal subunit. Contacts protein S5. The interaction surface between S4 and S5 is involved in control of translational fidelity.</text>
</comment>
<comment type="similarity">
    <text evidence="1">Belongs to the universal ribosomal protein uS4 family.</text>
</comment>
<feature type="chain" id="PRO_0000293252" description="Small ribosomal subunit protein uS4">
    <location>
        <begin position="1"/>
        <end position="207"/>
    </location>
</feature>
<feature type="domain" description="S4 RNA-binding" evidence="1">
    <location>
        <begin position="97"/>
        <end position="160"/>
    </location>
</feature>
<feature type="region of interest" description="Disordered" evidence="2">
    <location>
        <begin position="31"/>
        <end position="55"/>
    </location>
</feature>
<feature type="compositionally biased region" description="Polar residues" evidence="2">
    <location>
        <begin position="42"/>
        <end position="53"/>
    </location>
</feature>
<accession>Q2SU52</accession>
<dbReference type="EMBL" id="CP000086">
    <property type="protein sequence ID" value="ABC38629.1"/>
    <property type="molecule type" value="Genomic_DNA"/>
</dbReference>
<dbReference type="RefSeq" id="WP_009888438.1">
    <property type="nucleotide sequence ID" value="NZ_CP008786.1"/>
</dbReference>
<dbReference type="SMR" id="Q2SU52"/>
<dbReference type="GeneID" id="45122731"/>
<dbReference type="KEGG" id="bte:BTH_I3043"/>
<dbReference type="HOGENOM" id="CLU_092403_0_2_4"/>
<dbReference type="Proteomes" id="UP000001930">
    <property type="component" value="Chromosome I"/>
</dbReference>
<dbReference type="GO" id="GO:0015935">
    <property type="term" value="C:small ribosomal subunit"/>
    <property type="evidence" value="ECO:0007669"/>
    <property type="project" value="InterPro"/>
</dbReference>
<dbReference type="GO" id="GO:0019843">
    <property type="term" value="F:rRNA binding"/>
    <property type="evidence" value="ECO:0007669"/>
    <property type="project" value="UniProtKB-UniRule"/>
</dbReference>
<dbReference type="GO" id="GO:0003735">
    <property type="term" value="F:structural constituent of ribosome"/>
    <property type="evidence" value="ECO:0007669"/>
    <property type="project" value="InterPro"/>
</dbReference>
<dbReference type="GO" id="GO:0042274">
    <property type="term" value="P:ribosomal small subunit biogenesis"/>
    <property type="evidence" value="ECO:0007669"/>
    <property type="project" value="TreeGrafter"/>
</dbReference>
<dbReference type="GO" id="GO:0006412">
    <property type="term" value="P:translation"/>
    <property type="evidence" value="ECO:0007669"/>
    <property type="project" value="UniProtKB-UniRule"/>
</dbReference>
<dbReference type="CDD" id="cd00165">
    <property type="entry name" value="S4"/>
    <property type="match status" value="1"/>
</dbReference>
<dbReference type="FunFam" id="1.10.1050.10:FF:000001">
    <property type="entry name" value="30S ribosomal protein S4"/>
    <property type="match status" value="1"/>
</dbReference>
<dbReference type="FunFam" id="3.10.290.10:FF:000001">
    <property type="entry name" value="30S ribosomal protein S4"/>
    <property type="match status" value="1"/>
</dbReference>
<dbReference type="Gene3D" id="1.10.1050.10">
    <property type="entry name" value="Ribosomal Protein S4 Delta 41, Chain A, domain 1"/>
    <property type="match status" value="1"/>
</dbReference>
<dbReference type="Gene3D" id="3.10.290.10">
    <property type="entry name" value="RNA-binding S4 domain"/>
    <property type="match status" value="1"/>
</dbReference>
<dbReference type="HAMAP" id="MF_01306_B">
    <property type="entry name" value="Ribosomal_uS4_B"/>
    <property type="match status" value="1"/>
</dbReference>
<dbReference type="InterPro" id="IPR022801">
    <property type="entry name" value="Ribosomal_uS4"/>
</dbReference>
<dbReference type="InterPro" id="IPR005709">
    <property type="entry name" value="Ribosomal_uS4_bac-type"/>
</dbReference>
<dbReference type="InterPro" id="IPR018079">
    <property type="entry name" value="Ribosomal_uS4_CS"/>
</dbReference>
<dbReference type="InterPro" id="IPR001912">
    <property type="entry name" value="Ribosomal_uS4_N"/>
</dbReference>
<dbReference type="InterPro" id="IPR002942">
    <property type="entry name" value="S4_RNA-bd"/>
</dbReference>
<dbReference type="InterPro" id="IPR036986">
    <property type="entry name" value="S4_RNA-bd_sf"/>
</dbReference>
<dbReference type="NCBIfam" id="NF003717">
    <property type="entry name" value="PRK05327.1"/>
    <property type="match status" value="1"/>
</dbReference>
<dbReference type="NCBIfam" id="TIGR01017">
    <property type="entry name" value="rpsD_bact"/>
    <property type="match status" value="1"/>
</dbReference>
<dbReference type="PANTHER" id="PTHR11831">
    <property type="entry name" value="30S 40S RIBOSOMAL PROTEIN"/>
    <property type="match status" value="1"/>
</dbReference>
<dbReference type="PANTHER" id="PTHR11831:SF4">
    <property type="entry name" value="SMALL RIBOSOMAL SUBUNIT PROTEIN US4M"/>
    <property type="match status" value="1"/>
</dbReference>
<dbReference type="Pfam" id="PF00163">
    <property type="entry name" value="Ribosomal_S4"/>
    <property type="match status" value="1"/>
</dbReference>
<dbReference type="Pfam" id="PF01479">
    <property type="entry name" value="S4"/>
    <property type="match status" value="1"/>
</dbReference>
<dbReference type="SMART" id="SM01390">
    <property type="entry name" value="Ribosomal_S4"/>
    <property type="match status" value="1"/>
</dbReference>
<dbReference type="SMART" id="SM00363">
    <property type="entry name" value="S4"/>
    <property type="match status" value="1"/>
</dbReference>
<dbReference type="SUPFAM" id="SSF55174">
    <property type="entry name" value="Alpha-L RNA-binding motif"/>
    <property type="match status" value="1"/>
</dbReference>
<dbReference type="PROSITE" id="PS00632">
    <property type="entry name" value="RIBOSOMAL_S4"/>
    <property type="match status" value="1"/>
</dbReference>
<dbReference type="PROSITE" id="PS50889">
    <property type="entry name" value="S4"/>
    <property type="match status" value="1"/>
</dbReference>
<proteinExistence type="inferred from homology"/>
<gene>
    <name evidence="1" type="primary">rpsD</name>
    <name type="ordered locus">BTH_I3043</name>
</gene>
<keyword id="KW-0687">Ribonucleoprotein</keyword>
<keyword id="KW-0689">Ribosomal protein</keyword>
<keyword id="KW-0694">RNA-binding</keyword>
<keyword id="KW-0699">rRNA-binding</keyword>
<name>RS4_BURTA</name>
<protein>
    <recommendedName>
        <fullName evidence="1">Small ribosomal subunit protein uS4</fullName>
    </recommendedName>
    <alternativeName>
        <fullName evidence="3">30S ribosomal protein S4</fullName>
    </alternativeName>
</protein>
<reference key="1">
    <citation type="journal article" date="2005" name="BMC Genomics">
        <title>Bacterial genome adaptation to niches: divergence of the potential virulence genes in three Burkholderia species of different survival strategies.</title>
        <authorList>
            <person name="Kim H.S."/>
            <person name="Schell M.A."/>
            <person name="Yu Y."/>
            <person name="Ulrich R.L."/>
            <person name="Sarria S.H."/>
            <person name="Nierman W.C."/>
            <person name="DeShazer D."/>
        </authorList>
    </citation>
    <scope>NUCLEOTIDE SEQUENCE [LARGE SCALE GENOMIC DNA]</scope>
    <source>
        <strain>ATCC 700388 / DSM 13276 / CCUG 48851 / CIP 106301 / E264</strain>
    </source>
</reference>
<evidence type="ECO:0000255" key="1">
    <source>
        <dbReference type="HAMAP-Rule" id="MF_01306"/>
    </source>
</evidence>
<evidence type="ECO:0000256" key="2">
    <source>
        <dbReference type="SAM" id="MobiDB-lite"/>
    </source>
</evidence>
<evidence type="ECO:0000305" key="3"/>
<organism>
    <name type="scientific">Burkholderia thailandensis (strain ATCC 700388 / DSM 13276 / CCUG 48851 / CIP 106301 / E264)</name>
    <dbReference type="NCBI Taxonomy" id="271848"/>
    <lineage>
        <taxon>Bacteria</taxon>
        <taxon>Pseudomonadati</taxon>
        <taxon>Pseudomonadota</taxon>
        <taxon>Betaproteobacteria</taxon>
        <taxon>Burkholderiales</taxon>
        <taxon>Burkholderiaceae</taxon>
        <taxon>Burkholderia</taxon>
        <taxon>pseudomallei group</taxon>
    </lineage>
</organism>
<sequence length="207" mass="23182">MARYIGPKAKLSRREGTDLFLKSARRSLADKCKLDSKPGQHGRTSGARTSDYGTQLREKQKVKRIYGVLERQFRRYFAEADRRKGNTGENLLQLLESRLDNVVYRMGFGSTRAEARQLVSHKAITVNGIVANIPSQQVKAGDVISIREKAKKQARIVEALSLAEQGGMPSWVAVDAKKFEGTFKQVPERADIAGDINESLIVELYSR</sequence>